<organism>
    <name type="scientific">Saccharomyces cerevisiae (strain ATCC 204508 / S288c)</name>
    <name type="common">Baker's yeast</name>
    <dbReference type="NCBI Taxonomy" id="559292"/>
    <lineage>
        <taxon>Eukaryota</taxon>
        <taxon>Fungi</taxon>
        <taxon>Dikarya</taxon>
        <taxon>Ascomycota</taxon>
        <taxon>Saccharomycotina</taxon>
        <taxon>Saccharomycetes</taxon>
        <taxon>Saccharomycetales</taxon>
        <taxon>Saccharomycetaceae</taxon>
        <taxon>Saccharomyces</taxon>
    </lineage>
</organism>
<keyword id="KW-0002">3D-structure</keyword>
<keyword id="KW-0010">Activator</keyword>
<keyword id="KW-0175">Coiled coil</keyword>
<keyword id="KW-0963">Cytoplasm</keyword>
<keyword id="KW-1017">Isopeptide bond</keyword>
<keyword id="KW-0479">Metal-binding</keyword>
<keyword id="KW-0539">Nucleus</keyword>
<keyword id="KW-0597">Phosphoprotein</keyword>
<keyword id="KW-1185">Reference proteome</keyword>
<keyword id="KW-0678">Repressor</keyword>
<keyword id="KW-0694">RNA-binding</keyword>
<keyword id="KW-0804">Transcription</keyword>
<keyword id="KW-0805">Transcription regulation</keyword>
<keyword id="KW-0808">Transferase</keyword>
<keyword id="KW-0832">Ubl conjugation</keyword>
<keyword id="KW-0833">Ubl conjugation pathway</keyword>
<keyword id="KW-0862">Zinc</keyword>
<keyword id="KW-0863">Zinc-finger</keyword>
<sequence>MMNPHVQENLQAIHNALSNFDTSFLSEDEEDYCPLCIEPMDITDKNFFPCPCGYQICQFCYNNIRQNPELNGRCPACRRKYDDENVRYVTLSPEELKMERAKLARKEKERKHREKERKENEYTNRKHLSGTRVIQKNLVYVVGINPPVPYEEVAPTLKSEKYFGQYGKINKIVVNRKTPHSNNTTSEHYHHHSPGYGVYITFGSKDDAARCIAQVDGTYMDGRLIKAAYGTTKYCSSYLRGLPCPNPNCMFLHEPGEEADSFNKRELHNKQQAQQQSGGTAFTRSGIHNNISTSTAGSNTNLLSENFTGTPSPAAMRAQLHHDSHTNAGTPVLTPAPVPAGSNPWGVTQSATPVTSINLSKNSSSINLPTLNDSLGHHTTPTTENTITSTTTTTNTNATSHSHGSKKKQSLAAEEYKDPYDALGNAVDFLDARLHSLSNYQKRPISIKSNIIDEETYKKYPSLFSWDKIEASKKSDNTLANKLVEILAIKPIDYTASVVQFLQSVNVGVNDNITITDNTKTPTQPIRLQTVSQQIQPPLNVSTPPPGIFGPQHKVPIQQQQMGDTSSRNSSDLLNQLINGRKIIAGN</sequence>
<comment type="function">
    <text evidence="9 10">E3 ubiquitin-protein ligase component of the CCR4-NOT core complex, which in the nucleus seems to be a general transcription factor, and in the cytoplasm the major mRNA deadenylase involved in mRNA turnover (PubMed:30609991, PubMed:9463387). The NOT protein subcomplex negatively regulates the basal and activated transcription of many genes (PubMed:9463387). Preferentially affects TC-type TATA element-dependent transcription. Could directly or indirectly inhibit component(s) of the general transcription machinery (PubMed:9463387). In the cytoplasm, catalyzes monoubiquitination of RPS7/es7 in response to stalled ribosomes, initiating a HEL2-dependent response that activates the No-Go Decay (NGD) pathway (PubMed:30609991).</text>
</comment>
<comment type="catalytic activity">
    <reaction evidence="9">
        <text>S-ubiquitinyl-[E2 ubiquitin-conjugating enzyme]-L-cysteine + [acceptor protein]-L-lysine = [E2 ubiquitin-conjugating enzyme]-L-cysteine + N(6)-ubiquitinyl-[acceptor protein]-L-lysine.</text>
        <dbReference type="EC" id="2.3.2.27"/>
    </reaction>
</comment>
<comment type="pathway">
    <text evidence="9">Protein modification; protein ubiquitination.</text>
</comment>
<comment type="subunit">
    <text evidence="6 7 10">Forms a NOT protein complex that comprises NOT1, NOT2, NOT3, NOT4 and NOT5. Subunit of the 1.0 MDa CCR4-NOT core complex that contains CCR4, CAF1, NOT1, NOT2, NOT3, NOT4, NOT5, CAF40 and CAF130. In the complex interacts with NOT1. The core complex probably is part of a less characterized 1.9 MDa CCR4-NOT complex.</text>
</comment>
<comment type="interaction">
    <interactant intactId="EBI-12174">
        <id>P34909</id>
    </interactant>
    <interactant intactId="EBI-28306">
        <id>P53829</id>
        <label>CAF40</label>
    </interactant>
    <organismsDiffer>false</organismsDiffer>
    <experiments>6</experiments>
</comment>
<comment type="interaction">
    <interactant intactId="EBI-12174">
        <id>P34909</id>
    </interactant>
    <interactant intactId="EBI-4396">
        <id>P31384</id>
        <label>CCR4</label>
    </interactant>
    <organismsDiffer>false</organismsDiffer>
    <experiments>4</experiments>
</comment>
<comment type="interaction">
    <interactant intactId="EBI-12174">
        <id>P34909</id>
    </interactant>
    <interactant intactId="EBI-12153">
        <id>P06100</id>
        <label>CDC36</label>
    </interactant>
    <organismsDiffer>false</organismsDiffer>
    <experiments>4</experiments>
</comment>
<comment type="interaction">
    <interactant intactId="EBI-12174">
        <id>P34909</id>
    </interactant>
    <interactant intactId="EBI-12139">
        <id>P25655</id>
        <label>CDC39</label>
    </interactant>
    <organismsDiffer>false</organismsDiffer>
    <experiments>9</experiments>
</comment>
<comment type="interaction">
    <interactant intactId="EBI-12174">
        <id>P34909</id>
    </interactant>
    <interactant intactId="EBI-12184">
        <id>Q12514</id>
        <label>NOT5</label>
    </interactant>
    <organismsDiffer>false</organismsDiffer>
    <experiments>4</experiments>
</comment>
<comment type="interaction">
    <interactant intactId="EBI-12174">
        <id>P34909</id>
    </interactant>
    <interactant intactId="EBI-13629">
        <id>P39008</id>
        <label>POP2</label>
    </interactant>
    <organismsDiffer>false</organismsDiffer>
    <experiments>4</experiments>
</comment>
<comment type="interaction">
    <interactant intactId="EBI-12174">
        <id>P34909</id>
    </interactant>
    <interactant intactId="EBI-13914">
        <id>Q01939</id>
        <label>RPT6</label>
    </interactant>
    <organismsDiffer>false</organismsDiffer>
    <experiments>2</experiments>
</comment>
<comment type="interaction">
    <interactant intactId="EBI-12174">
        <id>P34909</id>
    </interactant>
    <interactant intactId="EBI-19735">
        <id>P15731</id>
        <label>UBC4</label>
    </interactant>
    <organismsDiffer>false</organismsDiffer>
    <experiments>3</experiments>
</comment>
<comment type="subcellular location">
    <subcellularLocation>
        <location evidence="12">Cytoplasm</location>
    </subcellularLocation>
    <subcellularLocation>
        <location>Nucleus</location>
    </subcellularLocation>
</comment>
<comment type="miscellaneous">
    <text evidence="8">Present with 4280 molecules/cell in log phase SD medium.</text>
</comment>
<name>NOT4_YEAST</name>
<evidence type="ECO:0000255" key="1"/>
<evidence type="ECO:0000255" key="2">
    <source>
        <dbReference type="PROSITE-ProRule" id="PRU00175"/>
    </source>
</evidence>
<evidence type="ECO:0000255" key="3">
    <source>
        <dbReference type="PROSITE-ProRule" id="PRU00176"/>
    </source>
</evidence>
<evidence type="ECO:0000255" key="4">
    <source>
        <dbReference type="PROSITE-ProRule" id="PRU00723"/>
    </source>
</evidence>
<evidence type="ECO:0000256" key="5">
    <source>
        <dbReference type="SAM" id="MobiDB-lite"/>
    </source>
</evidence>
<evidence type="ECO:0000269" key="6">
    <source>
    </source>
</evidence>
<evidence type="ECO:0000269" key="7">
    <source>
    </source>
</evidence>
<evidence type="ECO:0000269" key="8">
    <source>
    </source>
</evidence>
<evidence type="ECO:0000269" key="9">
    <source>
    </source>
</evidence>
<evidence type="ECO:0000269" key="10">
    <source>
    </source>
</evidence>
<evidence type="ECO:0000303" key="11">
    <source>
    </source>
</evidence>
<evidence type="ECO:0000305" key="12"/>
<evidence type="ECO:0007744" key="13">
    <source>
    </source>
</evidence>
<evidence type="ECO:0007744" key="14">
    <source>
    </source>
</evidence>
<evidence type="ECO:0007744" key="15">
    <source>
    </source>
</evidence>
<evidence type="ECO:0007829" key="16">
    <source>
        <dbReference type="PDB" id="5AIE"/>
    </source>
</evidence>
<feature type="chain" id="PRO_0000081681" description="General negative regulator of transcription subunit 4">
    <location>
        <begin position="1"/>
        <end position="587"/>
    </location>
</feature>
<feature type="domain" description="RRM" evidence="3">
    <location>
        <begin position="137"/>
        <end position="228"/>
    </location>
</feature>
<feature type="zinc finger region" description="RING-type" evidence="2">
    <location>
        <begin position="33"/>
        <end position="78"/>
    </location>
</feature>
<feature type="zinc finger region" description="C3H1-type" evidence="4">
    <location>
        <begin position="229"/>
        <end position="256"/>
    </location>
</feature>
<feature type="region of interest" description="Disordered" evidence="5">
    <location>
        <begin position="370"/>
        <end position="412"/>
    </location>
</feature>
<feature type="coiled-coil region" evidence="1">
    <location>
        <begin position="94"/>
        <end position="128"/>
    </location>
</feature>
<feature type="compositionally biased region" description="Low complexity" evidence="5">
    <location>
        <begin position="377"/>
        <end position="402"/>
    </location>
</feature>
<feature type="modified residue" description="Phosphothreonine" evidence="13 14">
    <location>
        <position position="310"/>
    </location>
</feature>
<feature type="modified residue" description="Phosphoserine" evidence="13 14">
    <location>
        <position position="312"/>
    </location>
</feature>
<feature type="modified residue" description="Phosphothreonine" evidence="14">
    <location>
        <position position="326"/>
    </location>
</feature>
<feature type="modified residue" description="Phosphoserine" evidence="14">
    <location>
        <position position="360"/>
    </location>
</feature>
<feature type="cross-link" description="Glycyl lysine isopeptide (Lys-Gly) (interchain with G-Cter in ubiquitin)" evidence="15">
    <location>
        <position position="270"/>
    </location>
</feature>
<feature type="turn" evidence="16">
    <location>
        <begin position="34"/>
        <end position="36"/>
    </location>
</feature>
<feature type="turn" evidence="16">
    <location>
        <begin position="42"/>
        <end position="46"/>
    </location>
</feature>
<feature type="helix" evidence="16">
    <location>
        <begin position="58"/>
        <end position="66"/>
    </location>
</feature>
<feature type="strand" evidence="16">
    <location>
        <begin position="68"/>
        <end position="70"/>
    </location>
</feature>
<feature type="turn" evidence="16">
    <location>
        <begin position="75"/>
        <end position="77"/>
    </location>
</feature>
<dbReference type="EC" id="2.3.2.27" evidence="9"/>
<dbReference type="EMBL" id="M96736">
    <property type="protein sequence ID" value="AAC37413.1"/>
    <property type="molecule type" value="Genomic_DNA"/>
</dbReference>
<dbReference type="EMBL" id="L26309">
    <property type="protein sequence ID" value="AAB00326.1"/>
    <property type="molecule type" value="Unassigned_DNA"/>
</dbReference>
<dbReference type="EMBL" id="U18813">
    <property type="protein sequence ID" value="AAB64604.1"/>
    <property type="molecule type" value="Genomic_DNA"/>
</dbReference>
<dbReference type="EMBL" id="BK006939">
    <property type="protein sequence ID" value="DAA07727.1"/>
    <property type="molecule type" value="Genomic_DNA"/>
</dbReference>
<dbReference type="PIR" id="A56015">
    <property type="entry name" value="A56015"/>
</dbReference>
<dbReference type="RefSeq" id="NP_010991.3">
    <property type="nucleotide sequence ID" value="NM_001178959.3"/>
</dbReference>
<dbReference type="PDB" id="5AIE">
    <property type="method" value="X-ray"/>
    <property type="resolution" value="2.80 A"/>
    <property type="chains" value="A=30-83"/>
</dbReference>
<dbReference type="PDB" id="5AJD">
    <property type="method" value="X-ray"/>
    <property type="resolution" value="3.62 A"/>
    <property type="chains" value="B/D/F/H/J/L=418-477"/>
</dbReference>
<dbReference type="PDBsum" id="5AIE"/>
<dbReference type="PDBsum" id="5AJD"/>
<dbReference type="SMR" id="P34909"/>
<dbReference type="BioGRID" id="36811">
    <property type="interactions" value="217"/>
</dbReference>
<dbReference type="ComplexPortal" id="CPX-1800">
    <property type="entry name" value="CCR4-NOT mRNA deadenylase complex"/>
</dbReference>
<dbReference type="DIP" id="DIP-2255N"/>
<dbReference type="FunCoup" id="P34909">
    <property type="interactions" value="521"/>
</dbReference>
<dbReference type="IntAct" id="P34909">
    <property type="interactions" value="28"/>
</dbReference>
<dbReference type="MINT" id="P34909"/>
<dbReference type="STRING" id="4932.YER068W"/>
<dbReference type="GlyGen" id="P34909">
    <property type="glycosylation" value="2 sites, 1 O-linked glycan (2 sites)"/>
</dbReference>
<dbReference type="iPTMnet" id="P34909"/>
<dbReference type="PaxDb" id="4932-YER068W"/>
<dbReference type="PeptideAtlas" id="P34909"/>
<dbReference type="EnsemblFungi" id="YER068W_mRNA">
    <property type="protein sequence ID" value="YER068W"/>
    <property type="gene ID" value="YER068W"/>
</dbReference>
<dbReference type="GeneID" id="856799"/>
<dbReference type="KEGG" id="sce:YER068W"/>
<dbReference type="AGR" id="SGD:S000000870"/>
<dbReference type="SGD" id="S000000870">
    <property type="gene designation" value="MOT2"/>
</dbReference>
<dbReference type="VEuPathDB" id="FungiDB:YER068W"/>
<dbReference type="eggNOG" id="KOG2068">
    <property type="taxonomic scope" value="Eukaryota"/>
</dbReference>
<dbReference type="GeneTree" id="ENSGT00940000174608"/>
<dbReference type="HOGENOM" id="CLU_028046_0_0_1"/>
<dbReference type="InParanoid" id="P34909"/>
<dbReference type="OMA" id="DGTYMDG"/>
<dbReference type="OrthoDB" id="1923159at2759"/>
<dbReference type="BioCyc" id="YEAST:G3O-30242-MONOMER"/>
<dbReference type="UniPathway" id="UPA00143"/>
<dbReference type="BioGRID-ORCS" id="856799">
    <property type="hits" value="5 hits in 13 CRISPR screens"/>
</dbReference>
<dbReference type="CD-CODE" id="A777E0F8">
    <property type="entry name" value="P-body"/>
</dbReference>
<dbReference type="CD-CODE" id="E03F929F">
    <property type="entry name" value="Stress granule"/>
</dbReference>
<dbReference type="EvolutionaryTrace" id="P34909"/>
<dbReference type="PRO" id="PR:P34909"/>
<dbReference type="Proteomes" id="UP000002311">
    <property type="component" value="Chromosome V"/>
</dbReference>
<dbReference type="RNAct" id="P34909">
    <property type="molecule type" value="protein"/>
</dbReference>
<dbReference type="GO" id="GO:0030014">
    <property type="term" value="C:CCR4-NOT complex"/>
    <property type="evidence" value="ECO:0000318"/>
    <property type="project" value="GO_Central"/>
</dbReference>
<dbReference type="GO" id="GO:0030015">
    <property type="term" value="C:CCR4-NOT core complex"/>
    <property type="evidence" value="ECO:0000353"/>
    <property type="project" value="SGD"/>
</dbReference>
<dbReference type="GO" id="GO:0005737">
    <property type="term" value="C:cytoplasm"/>
    <property type="evidence" value="ECO:0000314"/>
    <property type="project" value="SGD"/>
</dbReference>
<dbReference type="GO" id="GO:0022626">
    <property type="term" value="C:cytosolic ribosome"/>
    <property type="evidence" value="ECO:0000314"/>
    <property type="project" value="UniProt"/>
</dbReference>
<dbReference type="GO" id="GO:0005634">
    <property type="term" value="C:nucleus"/>
    <property type="evidence" value="ECO:0007669"/>
    <property type="project" value="UniProtKB-SubCell"/>
</dbReference>
<dbReference type="GO" id="GO:0003723">
    <property type="term" value="F:RNA binding"/>
    <property type="evidence" value="ECO:0007669"/>
    <property type="project" value="UniProtKB-KW"/>
</dbReference>
<dbReference type="GO" id="GO:0061630">
    <property type="term" value="F:ubiquitin protein ligase activity"/>
    <property type="evidence" value="ECO:0000314"/>
    <property type="project" value="UniProtKB"/>
</dbReference>
<dbReference type="GO" id="GO:0004842">
    <property type="term" value="F:ubiquitin-protein transferase activity"/>
    <property type="evidence" value="ECO:0000318"/>
    <property type="project" value="GO_Central"/>
</dbReference>
<dbReference type="GO" id="GO:0008270">
    <property type="term" value="F:zinc ion binding"/>
    <property type="evidence" value="ECO:0007669"/>
    <property type="project" value="UniProtKB-KW"/>
</dbReference>
<dbReference type="GO" id="GO:0031087">
    <property type="term" value="P:deadenylation-independent decapping of nuclear-transcribed mRNA"/>
    <property type="evidence" value="ECO:0000315"/>
    <property type="project" value="SGD"/>
</dbReference>
<dbReference type="GO" id="GO:0070966">
    <property type="term" value="P:nuclear-transcribed mRNA catabolic process, no-go decay"/>
    <property type="evidence" value="ECO:0000314"/>
    <property type="project" value="UniProt"/>
</dbReference>
<dbReference type="GO" id="GO:0000289">
    <property type="term" value="P:nuclear-transcribed mRNA poly(A) tail shortening"/>
    <property type="evidence" value="ECO:0000303"/>
    <property type="project" value="ComplexPortal"/>
</dbReference>
<dbReference type="GO" id="GO:0032968">
    <property type="term" value="P:positive regulation of transcription elongation by RNA polymerase II"/>
    <property type="evidence" value="ECO:0000314"/>
    <property type="project" value="ComplexPortal"/>
</dbReference>
<dbReference type="GO" id="GO:0010498">
    <property type="term" value="P:proteasomal protein catabolic process"/>
    <property type="evidence" value="ECO:0000316"/>
    <property type="project" value="SGD"/>
</dbReference>
<dbReference type="GO" id="GO:0006513">
    <property type="term" value="P:protein monoubiquitination"/>
    <property type="evidence" value="ECO:0000314"/>
    <property type="project" value="UniProt"/>
</dbReference>
<dbReference type="GO" id="GO:0000209">
    <property type="term" value="P:protein polyubiquitination"/>
    <property type="evidence" value="ECO:0000314"/>
    <property type="project" value="SGD"/>
</dbReference>
<dbReference type="GO" id="GO:0016567">
    <property type="term" value="P:protein ubiquitination"/>
    <property type="evidence" value="ECO:0000314"/>
    <property type="project" value="SGD"/>
</dbReference>
<dbReference type="CDD" id="cd16618">
    <property type="entry name" value="mRING-HC-C4C4_CNOT4"/>
    <property type="match status" value="1"/>
</dbReference>
<dbReference type="CDD" id="cd12438">
    <property type="entry name" value="RRM_CNOT4"/>
    <property type="match status" value="1"/>
</dbReference>
<dbReference type="FunFam" id="3.30.70.330:FF:000257">
    <property type="entry name" value="CCR4-NOT core complex subunit Not4"/>
    <property type="match status" value="1"/>
</dbReference>
<dbReference type="FunFam" id="3.30.40.10:FF:000006">
    <property type="entry name" value="CCR4-NOT transcription complex subunit 4"/>
    <property type="match status" value="1"/>
</dbReference>
<dbReference type="Gene3D" id="3.30.70.330">
    <property type="match status" value="1"/>
</dbReference>
<dbReference type="Gene3D" id="3.30.40.10">
    <property type="entry name" value="Zinc/RING finger domain, C3HC4 (zinc finger)"/>
    <property type="match status" value="1"/>
</dbReference>
<dbReference type="InterPro" id="IPR034261">
    <property type="entry name" value="CNOT4_RRM"/>
</dbReference>
<dbReference type="InterPro" id="IPR039780">
    <property type="entry name" value="Mot2"/>
</dbReference>
<dbReference type="InterPro" id="IPR039515">
    <property type="entry name" value="NOT4_mRING-HC-C4C4"/>
</dbReference>
<dbReference type="InterPro" id="IPR012677">
    <property type="entry name" value="Nucleotide-bd_a/b_plait_sf"/>
</dbReference>
<dbReference type="InterPro" id="IPR035979">
    <property type="entry name" value="RBD_domain_sf"/>
</dbReference>
<dbReference type="InterPro" id="IPR000504">
    <property type="entry name" value="RRM_dom"/>
</dbReference>
<dbReference type="InterPro" id="IPR003954">
    <property type="entry name" value="RRM_dom_euk"/>
</dbReference>
<dbReference type="InterPro" id="IPR000571">
    <property type="entry name" value="Znf_CCCH"/>
</dbReference>
<dbReference type="InterPro" id="IPR001841">
    <property type="entry name" value="Znf_RING"/>
</dbReference>
<dbReference type="InterPro" id="IPR013083">
    <property type="entry name" value="Znf_RING/FYVE/PHD"/>
</dbReference>
<dbReference type="PANTHER" id="PTHR12603">
    <property type="entry name" value="CCR4-NOT TRANSCRIPTION COMPLEX RELATED"/>
    <property type="match status" value="1"/>
</dbReference>
<dbReference type="PANTHER" id="PTHR12603:SF0">
    <property type="entry name" value="CCR4-NOT TRANSCRIPTION COMPLEX SUBUNIT 4"/>
    <property type="match status" value="1"/>
</dbReference>
<dbReference type="Pfam" id="PF14570">
    <property type="entry name" value="zf-RING_4"/>
    <property type="match status" value="1"/>
</dbReference>
<dbReference type="SMART" id="SM00361">
    <property type="entry name" value="RRM_1"/>
    <property type="match status" value="1"/>
</dbReference>
<dbReference type="SUPFAM" id="SSF57850">
    <property type="entry name" value="RING/U-box"/>
    <property type="match status" value="1"/>
</dbReference>
<dbReference type="SUPFAM" id="SSF54928">
    <property type="entry name" value="RNA-binding domain, RBD"/>
    <property type="match status" value="1"/>
</dbReference>
<dbReference type="PROSITE" id="PS50102">
    <property type="entry name" value="RRM"/>
    <property type="match status" value="1"/>
</dbReference>
<dbReference type="PROSITE" id="PS50103">
    <property type="entry name" value="ZF_C3H1"/>
    <property type="match status" value="1"/>
</dbReference>
<dbReference type="PROSITE" id="PS50089">
    <property type="entry name" value="ZF_RING_2"/>
    <property type="match status" value="1"/>
</dbReference>
<accession>P34909</accession>
<accession>D3DLX3</accession>
<gene>
    <name type="primary">MOT2</name>
    <name type="synonym">CCL1</name>
    <name evidence="11" type="synonym">NOT4</name>
    <name type="synonym">SIG1</name>
    <name type="synonym">SSF1</name>
    <name type="ordered locus">YER068W</name>
</gene>
<reference key="1">
    <citation type="journal article" date="1994" name="EMBO J.">
        <title>Molecular characterization of SIG1, a Saccharomyces cerevisiae gene involved in negative regulation of G-protein-mediated signal transduction.</title>
        <authorList>
            <person name="Leberer E."/>
            <person name="Dignard D."/>
            <person name="Harcus D."/>
            <person name="Whiteway M."/>
            <person name="Thomas D.Y."/>
        </authorList>
    </citation>
    <scope>NUCLEOTIDE SEQUENCE [GENOMIC DNA]</scope>
</reference>
<reference key="2">
    <citation type="journal article" date="1994" name="Mol. Cell. Biol.">
        <title>MOT2 encodes a negative regulator of gene expression that affects basal expression of pheromone-responsive genes in Saccharomyces cerevisiae.</title>
        <authorList>
            <person name="Cade R.M."/>
            <person name="Errede B."/>
        </authorList>
    </citation>
    <scope>NUCLEOTIDE SEQUENCE</scope>
</reference>
<reference key="3">
    <citation type="journal article" date="1994" name="Mol. Cell. Biol.">
        <title>The yeast MOT2 gene encodes a putative zinc finger protein that serves as a global negative regulator affecting expression of several categories of genes, including mating-pheromone-responsive genes.</title>
        <authorList>
            <person name="Irie K."/>
            <person name="Yamaguchi K."/>
            <person name="Kawase K."/>
            <person name="Matsumoto K."/>
        </authorList>
    </citation>
    <scope>NUCLEOTIDE SEQUENCE</scope>
</reference>
<reference key="4">
    <citation type="journal article" date="1997" name="Nature">
        <title>The nucleotide sequence of Saccharomyces cerevisiae chromosome V.</title>
        <authorList>
            <person name="Dietrich F.S."/>
            <person name="Mulligan J.T."/>
            <person name="Hennessy K.M."/>
            <person name="Yelton M.A."/>
            <person name="Allen E."/>
            <person name="Araujo R."/>
            <person name="Aviles E."/>
            <person name="Berno A."/>
            <person name="Brennan T."/>
            <person name="Carpenter J."/>
            <person name="Chen E."/>
            <person name="Cherry J.M."/>
            <person name="Chung E."/>
            <person name="Duncan M."/>
            <person name="Guzman E."/>
            <person name="Hartzell G."/>
            <person name="Hunicke-Smith S."/>
            <person name="Hyman R.W."/>
            <person name="Kayser A."/>
            <person name="Komp C."/>
            <person name="Lashkari D."/>
            <person name="Lew H."/>
            <person name="Lin D."/>
            <person name="Mosedale D."/>
            <person name="Nakahara K."/>
            <person name="Namath A."/>
            <person name="Norgren R."/>
            <person name="Oefner P."/>
            <person name="Oh C."/>
            <person name="Petel F.X."/>
            <person name="Roberts D."/>
            <person name="Sehl P."/>
            <person name="Schramm S."/>
            <person name="Shogren T."/>
            <person name="Smith V."/>
            <person name="Taylor P."/>
            <person name="Wei Y."/>
            <person name="Botstein D."/>
            <person name="Davis R.W."/>
        </authorList>
    </citation>
    <scope>NUCLEOTIDE SEQUENCE [LARGE SCALE GENOMIC DNA]</scope>
    <source>
        <strain>ATCC 204508 / S288c</strain>
    </source>
</reference>
<reference key="5">
    <citation type="journal article" date="2014" name="G3 (Bethesda)">
        <title>The reference genome sequence of Saccharomyces cerevisiae: Then and now.</title>
        <authorList>
            <person name="Engel S.R."/>
            <person name="Dietrich F.S."/>
            <person name="Fisk D.G."/>
            <person name="Binkley G."/>
            <person name="Balakrishnan R."/>
            <person name="Costanzo M.C."/>
            <person name="Dwight S.S."/>
            <person name="Hitz B.C."/>
            <person name="Karra K."/>
            <person name="Nash R.S."/>
            <person name="Weng S."/>
            <person name="Wong E.D."/>
            <person name="Lloyd P."/>
            <person name="Skrzypek M.S."/>
            <person name="Miyasato S.R."/>
            <person name="Simison M."/>
            <person name="Cherry J.M."/>
        </authorList>
    </citation>
    <scope>GENOME REANNOTATION</scope>
    <source>
        <strain>ATCC 204508 / S288c</strain>
    </source>
</reference>
<reference key="6">
    <citation type="journal article" date="1994" name="Genes Dev.">
        <title>NOT1(CDC39), NOT2(CDC36), NOT3, and NOT4 encode a global-negative regulator of transcription that differentially affects TATA-element utilization.</title>
        <authorList>
            <person name="Collart M.A."/>
            <person name="Struhl K."/>
        </authorList>
    </citation>
    <scope>CHARACTERIZATION</scope>
</reference>
<reference key="7">
    <citation type="journal article" date="1998" name="EMBO J.">
        <title>The NOT proteins are part of the CCR4 transcriptional complex and affect gene expression both positively and negatively.</title>
        <authorList>
            <person name="Liu H.Y."/>
            <person name="Badarinarayana V."/>
            <person name="Audino D.C."/>
            <person name="Rappsilber J."/>
            <person name="Mann M."/>
            <person name="Denis C.L."/>
        </authorList>
    </citation>
    <scope>IDENTIFICATION IN THE CCR4-NOT CORE COMPLEX</scope>
    <scope>FUNCTION OF THE CCR4-NOT CORE COMPLEX IN TRANSCRIPTIONAL REGULATION</scope>
</reference>
<reference key="8">
    <citation type="journal article" date="1999" name="Mol. Cell. Biol.">
        <title>The CCR4 and CAF1 proteins of the CCR4-NOT complex are physically and functionally separated from NOT2, NOT4, and NOT5.</title>
        <authorList>
            <person name="Bai Y."/>
            <person name="Salvadore C."/>
            <person name="Chiang Y.C."/>
            <person name="Collart M.A."/>
            <person name="Liu H.Y."/>
            <person name="Denis C.L."/>
        </authorList>
    </citation>
    <scope>INTERACTION WITH NOT1</scope>
</reference>
<reference key="9">
    <citation type="journal article" date="2001" name="J. Mol. Biol.">
        <title>Purification and characterization of the 1.0 MDa CCR4-NOT complex identifies two novel components of the complex.</title>
        <authorList>
            <person name="Chen J."/>
            <person name="Rappsilber J."/>
            <person name="Chiang Y.C."/>
            <person name="Russell P."/>
            <person name="Mann M."/>
            <person name="Denis C.L."/>
        </authorList>
    </citation>
    <scope>IDENTIFICATION IN THE CCR4-NOT CORE COMPLEX</scope>
</reference>
<reference key="10">
    <citation type="journal article" date="2003" name="Nature">
        <title>Global analysis of protein expression in yeast.</title>
        <authorList>
            <person name="Ghaemmaghami S."/>
            <person name="Huh W.-K."/>
            <person name="Bower K."/>
            <person name="Howson R.W."/>
            <person name="Belle A."/>
            <person name="Dephoure N."/>
            <person name="O'Shea E.K."/>
            <person name="Weissman J.S."/>
        </authorList>
    </citation>
    <scope>LEVEL OF PROTEIN EXPRESSION [LARGE SCALE ANALYSIS]</scope>
</reference>
<reference key="11">
    <citation type="journal article" date="2007" name="J. Proteome Res.">
        <title>Large-scale phosphorylation analysis of alpha-factor-arrested Saccharomyces cerevisiae.</title>
        <authorList>
            <person name="Li X."/>
            <person name="Gerber S.A."/>
            <person name="Rudner A.D."/>
            <person name="Beausoleil S.A."/>
            <person name="Haas W."/>
            <person name="Villen J."/>
            <person name="Elias J.E."/>
            <person name="Gygi S.P."/>
        </authorList>
    </citation>
    <scope>PHOSPHORYLATION [LARGE SCALE ANALYSIS] AT THR-310 AND SER-312</scope>
    <scope>IDENTIFICATION BY MASS SPECTROMETRY [LARGE SCALE ANALYSIS]</scope>
    <source>
        <strain>ADR376</strain>
    </source>
</reference>
<reference key="12">
    <citation type="journal article" date="2008" name="Mol. Cell. Proteomics">
        <title>A multidimensional chromatography technology for in-depth phosphoproteome analysis.</title>
        <authorList>
            <person name="Albuquerque C.P."/>
            <person name="Smolka M.B."/>
            <person name="Payne S.H."/>
            <person name="Bafna V."/>
            <person name="Eng J."/>
            <person name="Zhou H."/>
        </authorList>
    </citation>
    <scope>IDENTIFICATION BY MASS SPECTROMETRY [LARGE SCALE ANALYSIS]</scope>
</reference>
<reference key="13">
    <citation type="journal article" date="2009" name="Science">
        <title>Global analysis of Cdk1 substrate phosphorylation sites provides insights into evolution.</title>
        <authorList>
            <person name="Holt L.J."/>
            <person name="Tuch B.B."/>
            <person name="Villen J."/>
            <person name="Johnson A.D."/>
            <person name="Gygi S.P."/>
            <person name="Morgan D.O."/>
        </authorList>
    </citation>
    <scope>PHOSPHORYLATION [LARGE SCALE ANALYSIS] AT THR-310; SER-312; THR-326 AND SER-360</scope>
    <scope>IDENTIFICATION BY MASS SPECTROMETRY [LARGE SCALE ANALYSIS]</scope>
</reference>
<reference key="14">
    <citation type="journal article" date="2012" name="Proteomics">
        <title>Sites of ubiquitin attachment in Saccharomyces cerevisiae.</title>
        <authorList>
            <person name="Starita L.M."/>
            <person name="Lo R.S."/>
            <person name="Eng J.K."/>
            <person name="von Haller P.D."/>
            <person name="Fields S."/>
        </authorList>
    </citation>
    <scope>UBIQUITINATION [LARGE SCALE ANALYSIS] AT LYS-270</scope>
    <scope>IDENTIFICATION BY MASS SPECTROMETRY [LARGE SCALE ANALYSIS]</scope>
</reference>
<reference key="15">
    <citation type="journal article" date="2019" name="EMBO J.">
        <title>Collided ribosomes form a unique structural interface to induce Hel2-driven quality control pathways.</title>
        <authorList>
            <person name="Ikeuchi K."/>
            <person name="Tesina P."/>
            <person name="Matsuo Y."/>
            <person name="Sugiyama T."/>
            <person name="Cheng J."/>
            <person name="Saeki Y."/>
            <person name="Tanaka K."/>
            <person name="Becker T."/>
            <person name="Beckmann R."/>
            <person name="Inada T."/>
        </authorList>
    </citation>
    <scope>FUNCTION</scope>
    <scope>CATALYTIC ACTIVITY</scope>
    <scope>PATHWAY</scope>
</reference>
<protein>
    <recommendedName>
        <fullName>General negative regulator of transcription subunit 4</fullName>
        <ecNumber evidence="9">2.3.2.27</ecNumber>
    </recommendedName>
    <alternativeName>
        <fullName>Modulator of transcription 2</fullName>
    </alternativeName>
</protein>
<proteinExistence type="evidence at protein level"/>